<accession>Q4KK09</accession>
<gene>
    <name evidence="1" type="primary">rimK</name>
    <name type="ordered locus">PFL_0278</name>
</gene>
<dbReference type="EC" id="6.3.2.-" evidence="1"/>
<dbReference type="EMBL" id="CP000076">
    <property type="protein sequence ID" value="AAY95689.1"/>
    <property type="molecule type" value="Genomic_DNA"/>
</dbReference>
<dbReference type="RefSeq" id="WP_007931744.1">
    <property type="nucleotide sequence ID" value="NC_004129.6"/>
</dbReference>
<dbReference type="SMR" id="Q4KK09"/>
<dbReference type="STRING" id="220664.PFL_0278"/>
<dbReference type="GeneID" id="93400883"/>
<dbReference type="KEGG" id="pfl:PFL_0278"/>
<dbReference type="eggNOG" id="COG0189">
    <property type="taxonomic scope" value="Bacteria"/>
</dbReference>
<dbReference type="HOGENOM" id="CLU_054353_0_1_6"/>
<dbReference type="Proteomes" id="UP000008540">
    <property type="component" value="Chromosome"/>
</dbReference>
<dbReference type="GO" id="GO:0005737">
    <property type="term" value="C:cytoplasm"/>
    <property type="evidence" value="ECO:0007669"/>
    <property type="project" value="TreeGrafter"/>
</dbReference>
<dbReference type="GO" id="GO:0005524">
    <property type="term" value="F:ATP binding"/>
    <property type="evidence" value="ECO:0007669"/>
    <property type="project" value="UniProtKB-UniRule"/>
</dbReference>
<dbReference type="GO" id="GO:0046872">
    <property type="term" value="F:metal ion binding"/>
    <property type="evidence" value="ECO:0007669"/>
    <property type="project" value="UniProtKB-KW"/>
</dbReference>
<dbReference type="GO" id="GO:0018169">
    <property type="term" value="F:ribosomal S6-glutamic acid ligase activity"/>
    <property type="evidence" value="ECO:0007669"/>
    <property type="project" value="TreeGrafter"/>
</dbReference>
<dbReference type="GO" id="GO:0036211">
    <property type="term" value="P:protein modification process"/>
    <property type="evidence" value="ECO:0007669"/>
    <property type="project" value="InterPro"/>
</dbReference>
<dbReference type="GO" id="GO:0009432">
    <property type="term" value="P:SOS response"/>
    <property type="evidence" value="ECO:0007669"/>
    <property type="project" value="TreeGrafter"/>
</dbReference>
<dbReference type="GO" id="GO:0006412">
    <property type="term" value="P:translation"/>
    <property type="evidence" value="ECO:0007669"/>
    <property type="project" value="UniProtKB-KW"/>
</dbReference>
<dbReference type="FunFam" id="3.40.50.20:FF:000004">
    <property type="entry name" value="Probable alpha-L-glutamate ligase"/>
    <property type="match status" value="1"/>
</dbReference>
<dbReference type="FunFam" id="3.30.1490.20:FF:000005">
    <property type="entry name" value="Probable alpha-L-glutamate ligase 1"/>
    <property type="match status" value="1"/>
</dbReference>
<dbReference type="FunFam" id="3.30.470.20:FF:000016">
    <property type="entry name" value="Ribosomal protein S6--L-glutamate ligase"/>
    <property type="match status" value="1"/>
</dbReference>
<dbReference type="Gene3D" id="3.40.50.20">
    <property type="match status" value="1"/>
</dbReference>
<dbReference type="Gene3D" id="3.30.1490.20">
    <property type="entry name" value="ATP-grasp fold, A domain"/>
    <property type="match status" value="1"/>
</dbReference>
<dbReference type="Gene3D" id="3.30.470.20">
    <property type="entry name" value="ATP-grasp fold, B domain"/>
    <property type="match status" value="1"/>
</dbReference>
<dbReference type="HAMAP" id="MF_01552">
    <property type="entry name" value="RimK"/>
    <property type="match status" value="1"/>
</dbReference>
<dbReference type="InterPro" id="IPR011761">
    <property type="entry name" value="ATP-grasp"/>
</dbReference>
<dbReference type="InterPro" id="IPR013651">
    <property type="entry name" value="ATP-grasp_RimK-type"/>
</dbReference>
<dbReference type="InterPro" id="IPR013815">
    <property type="entry name" value="ATP_grasp_subdomain_1"/>
</dbReference>
<dbReference type="InterPro" id="IPR023533">
    <property type="entry name" value="RimK"/>
</dbReference>
<dbReference type="InterPro" id="IPR041107">
    <property type="entry name" value="Rimk_N"/>
</dbReference>
<dbReference type="InterPro" id="IPR004666">
    <property type="entry name" value="Rp_bS6_RimK/Lys_biosynth_LsyX"/>
</dbReference>
<dbReference type="NCBIfam" id="NF007764">
    <property type="entry name" value="PRK10446.1"/>
    <property type="match status" value="1"/>
</dbReference>
<dbReference type="NCBIfam" id="TIGR00768">
    <property type="entry name" value="rimK_fam"/>
    <property type="match status" value="1"/>
</dbReference>
<dbReference type="PANTHER" id="PTHR21621:SF7">
    <property type="entry name" value="RIBOSOMAL PROTEIN BS6--L-GLUTAMATE LIGASE"/>
    <property type="match status" value="1"/>
</dbReference>
<dbReference type="PANTHER" id="PTHR21621">
    <property type="entry name" value="RIBOSOMAL PROTEIN S6 MODIFICATION PROTEIN"/>
    <property type="match status" value="1"/>
</dbReference>
<dbReference type="Pfam" id="PF08443">
    <property type="entry name" value="RimK"/>
    <property type="match status" value="1"/>
</dbReference>
<dbReference type="Pfam" id="PF18030">
    <property type="entry name" value="Rimk_N"/>
    <property type="match status" value="1"/>
</dbReference>
<dbReference type="SUPFAM" id="SSF56059">
    <property type="entry name" value="Glutathione synthetase ATP-binding domain-like"/>
    <property type="match status" value="1"/>
</dbReference>
<dbReference type="PROSITE" id="PS50975">
    <property type="entry name" value="ATP_GRASP"/>
    <property type="match status" value="1"/>
</dbReference>
<keyword id="KW-0067">ATP-binding</keyword>
<keyword id="KW-0436">Ligase</keyword>
<keyword id="KW-0460">Magnesium</keyword>
<keyword id="KW-0464">Manganese</keyword>
<keyword id="KW-0479">Metal-binding</keyword>
<keyword id="KW-0547">Nucleotide-binding</keyword>
<keyword id="KW-0648">Protein biosynthesis</keyword>
<comment type="cofactor">
    <cofactor evidence="1">
        <name>Mg(2+)</name>
        <dbReference type="ChEBI" id="CHEBI:18420"/>
    </cofactor>
    <cofactor evidence="1">
        <name>Mn(2+)</name>
        <dbReference type="ChEBI" id="CHEBI:29035"/>
    </cofactor>
    <text evidence="1">Binds 2 magnesium or manganese ions per subunit.</text>
</comment>
<comment type="similarity">
    <text evidence="1">Belongs to the RimK family.</text>
</comment>
<feature type="chain" id="PRO_0000205472" description="Probable alpha-L-glutamate ligase">
    <location>
        <begin position="1"/>
        <end position="301"/>
    </location>
</feature>
<feature type="domain" description="ATP-grasp" evidence="1">
    <location>
        <begin position="104"/>
        <end position="287"/>
    </location>
</feature>
<feature type="binding site" evidence="1">
    <location>
        <position position="141"/>
    </location>
    <ligand>
        <name>ATP</name>
        <dbReference type="ChEBI" id="CHEBI:30616"/>
    </ligand>
</feature>
<feature type="binding site" evidence="1">
    <location>
        <begin position="178"/>
        <end position="179"/>
    </location>
    <ligand>
        <name>ATP</name>
        <dbReference type="ChEBI" id="CHEBI:30616"/>
    </ligand>
</feature>
<feature type="binding site" evidence="1">
    <location>
        <position position="187"/>
    </location>
    <ligand>
        <name>ATP</name>
        <dbReference type="ChEBI" id="CHEBI:30616"/>
    </ligand>
</feature>
<feature type="binding site" evidence="1">
    <location>
        <begin position="211"/>
        <end position="213"/>
    </location>
    <ligand>
        <name>ATP</name>
        <dbReference type="ChEBI" id="CHEBI:30616"/>
    </ligand>
</feature>
<feature type="binding site" evidence="1">
    <location>
        <position position="248"/>
    </location>
    <ligand>
        <name>Mg(2+)</name>
        <dbReference type="ChEBI" id="CHEBI:18420"/>
        <label>1</label>
    </ligand>
</feature>
<feature type="binding site" evidence="1">
    <location>
        <position position="248"/>
    </location>
    <ligand>
        <name>Mn(2+)</name>
        <dbReference type="ChEBI" id="CHEBI:29035"/>
        <label>1</label>
    </ligand>
</feature>
<feature type="binding site" evidence="1">
    <location>
        <position position="260"/>
    </location>
    <ligand>
        <name>Mg(2+)</name>
        <dbReference type="ChEBI" id="CHEBI:18420"/>
        <label>1</label>
    </ligand>
</feature>
<feature type="binding site" evidence="1">
    <location>
        <position position="260"/>
    </location>
    <ligand>
        <name>Mg(2+)</name>
        <dbReference type="ChEBI" id="CHEBI:18420"/>
        <label>2</label>
    </ligand>
</feature>
<feature type="binding site" evidence="1">
    <location>
        <position position="260"/>
    </location>
    <ligand>
        <name>Mn(2+)</name>
        <dbReference type="ChEBI" id="CHEBI:29035"/>
        <label>1</label>
    </ligand>
</feature>
<feature type="binding site" evidence="1">
    <location>
        <position position="260"/>
    </location>
    <ligand>
        <name>Mn(2+)</name>
        <dbReference type="ChEBI" id="CHEBI:29035"/>
        <label>2</label>
    </ligand>
</feature>
<feature type="binding site" evidence="1">
    <location>
        <position position="262"/>
    </location>
    <ligand>
        <name>Mg(2+)</name>
        <dbReference type="ChEBI" id="CHEBI:18420"/>
        <label>2</label>
    </ligand>
</feature>
<feature type="binding site" evidence="1">
    <location>
        <position position="262"/>
    </location>
    <ligand>
        <name>Mn(2+)</name>
        <dbReference type="ChEBI" id="CHEBI:29035"/>
        <label>2</label>
    </ligand>
</feature>
<protein>
    <recommendedName>
        <fullName evidence="1">Probable alpha-L-glutamate ligase</fullName>
        <ecNumber evidence="1">6.3.2.-</ecNumber>
    </recommendedName>
</protein>
<evidence type="ECO:0000255" key="1">
    <source>
        <dbReference type="HAMAP-Rule" id="MF_01552"/>
    </source>
</evidence>
<reference key="1">
    <citation type="journal article" date="2005" name="Nat. Biotechnol.">
        <title>Complete genome sequence of the plant commensal Pseudomonas fluorescens Pf-5.</title>
        <authorList>
            <person name="Paulsen I.T."/>
            <person name="Press C.M."/>
            <person name="Ravel J."/>
            <person name="Kobayashi D.Y."/>
            <person name="Myers G.S.A."/>
            <person name="Mavrodi D.V."/>
            <person name="DeBoy R.T."/>
            <person name="Seshadri R."/>
            <person name="Ren Q."/>
            <person name="Madupu R."/>
            <person name="Dodson R.J."/>
            <person name="Durkin A.S."/>
            <person name="Brinkac L.M."/>
            <person name="Daugherty S.C."/>
            <person name="Sullivan S.A."/>
            <person name="Rosovitz M.J."/>
            <person name="Gwinn M.L."/>
            <person name="Zhou L."/>
            <person name="Schneider D.J."/>
            <person name="Cartinhour S.W."/>
            <person name="Nelson W.C."/>
            <person name="Weidman J."/>
            <person name="Watkins K."/>
            <person name="Tran K."/>
            <person name="Khouri H."/>
            <person name="Pierson E.A."/>
            <person name="Pierson L.S. III"/>
            <person name="Thomashow L.S."/>
            <person name="Loper J.E."/>
        </authorList>
    </citation>
    <scope>NUCLEOTIDE SEQUENCE [LARGE SCALE GENOMIC DNA]</scope>
    <source>
        <strain>ATCC BAA-477 / NRRL B-23932 / Pf-5</strain>
    </source>
</reference>
<proteinExistence type="inferred from homology"/>
<organism>
    <name type="scientific">Pseudomonas fluorescens (strain ATCC BAA-477 / NRRL B-23932 / Pf-5)</name>
    <dbReference type="NCBI Taxonomy" id="220664"/>
    <lineage>
        <taxon>Bacteria</taxon>
        <taxon>Pseudomonadati</taxon>
        <taxon>Pseudomonadota</taxon>
        <taxon>Gammaproteobacteria</taxon>
        <taxon>Pseudomonadales</taxon>
        <taxon>Pseudomonadaceae</taxon>
        <taxon>Pseudomonas</taxon>
    </lineage>
</organism>
<sequence length="301" mass="32511">MKIAVLSRNPRLYSTRRLVEAGTERGHEMVVVDTLRAYMNIASHKPQIHYRGKPLEGFDAVIPRIGASVTFYGCAVLRQFEMMGVFPLNESVAIARSRDKLRSLQLLSRRGIGLPVTGFAHSPDDIPDLIEMVNGAPLVIKVLEGTQGIGVVLCETATAAESVIEAFMGLKQNIMVQEYIKEAGGADIRCFVVGDKVIAAMKRQAKPGEFRSNLHRGGSASLIKITPEERMTALRAAKVMGLSVAGVDILRSNHGPLVMEVNSSPGLEGIETTTGKNVAGIIIEHIEKNGGPNMTRTKGKG</sequence>
<name>RIMK_PSEF5</name>